<name>NTPPA_ANADE</name>
<proteinExistence type="inferred from homology"/>
<evidence type="ECO:0000255" key="1">
    <source>
        <dbReference type="HAMAP-Rule" id="MF_00528"/>
    </source>
</evidence>
<gene>
    <name type="ordered locus">Adeh_2502</name>
</gene>
<sequence length="194" mass="20593">MAPRLVLASQSPRRRELLGQLGLALDVRPADTDERVLPGEPPRDYVLRVAREKARAVPGEVVLAADTAVVLGGEVLGKPRDAEDARRMLRALSGTRHEVLTGVCVRRNASALGVELDAVVATEVAFARLGDAEIDWYVGTGEPLDKAGAYAIQGSGGAFVQEVRGSVSNVVGLPLAETAALLRRAGFPLPWEQP</sequence>
<feature type="chain" id="PRO_0000267243" description="dTTP/UTP pyrophosphatase">
    <location>
        <begin position="1"/>
        <end position="194"/>
    </location>
</feature>
<feature type="active site" description="Proton acceptor" evidence="1">
    <location>
        <position position="66"/>
    </location>
</feature>
<feature type="site" description="Important for substrate specificity" evidence="1">
    <location>
        <position position="13"/>
    </location>
</feature>
<feature type="site" description="Important for substrate specificity" evidence="1">
    <location>
        <position position="67"/>
    </location>
</feature>
<feature type="site" description="Important for substrate specificity" evidence="1">
    <location>
        <position position="153"/>
    </location>
</feature>
<keyword id="KW-0963">Cytoplasm</keyword>
<keyword id="KW-0378">Hydrolase</keyword>
<keyword id="KW-0546">Nucleotide metabolism</keyword>
<keyword id="KW-1185">Reference proteome</keyword>
<comment type="function">
    <text evidence="1">Nucleoside triphosphate pyrophosphatase that hydrolyzes dTTP and UTP. May have a dual role in cell division arrest and in preventing the incorporation of modified nucleotides into cellular nucleic acids.</text>
</comment>
<comment type="catalytic activity">
    <reaction evidence="1">
        <text>dTTP + H2O = dTMP + diphosphate + H(+)</text>
        <dbReference type="Rhea" id="RHEA:28534"/>
        <dbReference type="ChEBI" id="CHEBI:15377"/>
        <dbReference type="ChEBI" id="CHEBI:15378"/>
        <dbReference type="ChEBI" id="CHEBI:33019"/>
        <dbReference type="ChEBI" id="CHEBI:37568"/>
        <dbReference type="ChEBI" id="CHEBI:63528"/>
        <dbReference type="EC" id="3.6.1.9"/>
    </reaction>
</comment>
<comment type="catalytic activity">
    <reaction evidence="1">
        <text>UTP + H2O = UMP + diphosphate + H(+)</text>
        <dbReference type="Rhea" id="RHEA:29395"/>
        <dbReference type="ChEBI" id="CHEBI:15377"/>
        <dbReference type="ChEBI" id="CHEBI:15378"/>
        <dbReference type="ChEBI" id="CHEBI:33019"/>
        <dbReference type="ChEBI" id="CHEBI:46398"/>
        <dbReference type="ChEBI" id="CHEBI:57865"/>
        <dbReference type="EC" id="3.6.1.9"/>
    </reaction>
</comment>
<comment type="cofactor">
    <cofactor evidence="1">
        <name>a divalent metal cation</name>
        <dbReference type="ChEBI" id="CHEBI:60240"/>
    </cofactor>
</comment>
<comment type="subcellular location">
    <subcellularLocation>
        <location evidence="1">Cytoplasm</location>
    </subcellularLocation>
</comment>
<comment type="similarity">
    <text evidence="1">Belongs to the Maf family. YhdE subfamily.</text>
</comment>
<protein>
    <recommendedName>
        <fullName evidence="1">dTTP/UTP pyrophosphatase</fullName>
        <shortName evidence="1">dTTPase/UTPase</shortName>
        <ecNumber evidence="1">3.6.1.9</ecNumber>
    </recommendedName>
    <alternativeName>
        <fullName evidence="1">Nucleoside triphosphate pyrophosphatase</fullName>
    </alternativeName>
    <alternativeName>
        <fullName evidence="1">Nucleotide pyrophosphatase</fullName>
        <shortName evidence="1">Nucleotide PPase</shortName>
    </alternativeName>
</protein>
<reference key="1">
    <citation type="submission" date="2006-01" db="EMBL/GenBank/DDBJ databases">
        <title>Complete sequence of Anaeromyxobacter dehalogenans 2CP-C.</title>
        <authorList>
            <person name="Copeland A."/>
            <person name="Lucas S."/>
            <person name="Lapidus A."/>
            <person name="Barry K."/>
            <person name="Detter J.C."/>
            <person name="Glavina T."/>
            <person name="Hammon N."/>
            <person name="Israni S."/>
            <person name="Pitluck S."/>
            <person name="Brettin T."/>
            <person name="Bruce D."/>
            <person name="Han C."/>
            <person name="Tapia R."/>
            <person name="Gilna P."/>
            <person name="Kiss H."/>
            <person name="Schmutz J."/>
            <person name="Larimer F."/>
            <person name="Land M."/>
            <person name="Kyrpides N."/>
            <person name="Anderson I."/>
            <person name="Sanford R.A."/>
            <person name="Ritalahti K.M."/>
            <person name="Thomas H.S."/>
            <person name="Kirby J.R."/>
            <person name="Zhulin I.B."/>
            <person name="Loeffler F.E."/>
            <person name="Richardson P."/>
        </authorList>
    </citation>
    <scope>NUCLEOTIDE SEQUENCE [LARGE SCALE GENOMIC DNA]</scope>
    <source>
        <strain>2CP-C</strain>
    </source>
</reference>
<organism>
    <name type="scientific">Anaeromyxobacter dehalogenans (strain 2CP-C)</name>
    <dbReference type="NCBI Taxonomy" id="290397"/>
    <lineage>
        <taxon>Bacteria</taxon>
        <taxon>Pseudomonadati</taxon>
        <taxon>Myxococcota</taxon>
        <taxon>Myxococcia</taxon>
        <taxon>Myxococcales</taxon>
        <taxon>Cystobacterineae</taxon>
        <taxon>Anaeromyxobacteraceae</taxon>
        <taxon>Anaeromyxobacter</taxon>
    </lineage>
</organism>
<accession>Q2IKU4</accession>
<dbReference type="EC" id="3.6.1.9" evidence="1"/>
<dbReference type="EMBL" id="CP000251">
    <property type="protein sequence ID" value="ABC82272.1"/>
    <property type="molecule type" value="Genomic_DNA"/>
</dbReference>
<dbReference type="RefSeq" id="WP_011421554.1">
    <property type="nucleotide sequence ID" value="NC_007760.1"/>
</dbReference>
<dbReference type="SMR" id="Q2IKU4"/>
<dbReference type="STRING" id="290397.Adeh_2502"/>
<dbReference type="KEGG" id="ade:Adeh_2502"/>
<dbReference type="eggNOG" id="COG0424">
    <property type="taxonomic scope" value="Bacteria"/>
</dbReference>
<dbReference type="HOGENOM" id="CLU_040416_2_1_7"/>
<dbReference type="OrthoDB" id="9807767at2"/>
<dbReference type="Proteomes" id="UP000001935">
    <property type="component" value="Chromosome"/>
</dbReference>
<dbReference type="GO" id="GO:0005737">
    <property type="term" value="C:cytoplasm"/>
    <property type="evidence" value="ECO:0007669"/>
    <property type="project" value="UniProtKB-SubCell"/>
</dbReference>
<dbReference type="GO" id="GO:0036218">
    <property type="term" value="F:dTTP diphosphatase activity"/>
    <property type="evidence" value="ECO:0007669"/>
    <property type="project" value="RHEA"/>
</dbReference>
<dbReference type="GO" id="GO:0036221">
    <property type="term" value="F:UTP diphosphatase activity"/>
    <property type="evidence" value="ECO:0007669"/>
    <property type="project" value="RHEA"/>
</dbReference>
<dbReference type="GO" id="GO:0009117">
    <property type="term" value="P:nucleotide metabolic process"/>
    <property type="evidence" value="ECO:0007669"/>
    <property type="project" value="UniProtKB-KW"/>
</dbReference>
<dbReference type="CDD" id="cd00555">
    <property type="entry name" value="Maf"/>
    <property type="match status" value="1"/>
</dbReference>
<dbReference type="Gene3D" id="3.90.950.10">
    <property type="match status" value="1"/>
</dbReference>
<dbReference type="HAMAP" id="MF_00528">
    <property type="entry name" value="Maf"/>
    <property type="match status" value="1"/>
</dbReference>
<dbReference type="InterPro" id="IPR029001">
    <property type="entry name" value="ITPase-like_fam"/>
</dbReference>
<dbReference type="InterPro" id="IPR003697">
    <property type="entry name" value="Maf-like"/>
</dbReference>
<dbReference type="NCBIfam" id="TIGR00172">
    <property type="entry name" value="maf"/>
    <property type="match status" value="1"/>
</dbReference>
<dbReference type="PANTHER" id="PTHR43213">
    <property type="entry name" value="BIFUNCTIONAL DTTP/UTP PYROPHOSPHATASE/METHYLTRANSFERASE PROTEIN-RELATED"/>
    <property type="match status" value="1"/>
</dbReference>
<dbReference type="PANTHER" id="PTHR43213:SF5">
    <property type="entry name" value="BIFUNCTIONAL DTTP_UTP PYROPHOSPHATASE_METHYLTRANSFERASE PROTEIN-RELATED"/>
    <property type="match status" value="1"/>
</dbReference>
<dbReference type="Pfam" id="PF02545">
    <property type="entry name" value="Maf"/>
    <property type="match status" value="1"/>
</dbReference>
<dbReference type="PIRSF" id="PIRSF006305">
    <property type="entry name" value="Maf"/>
    <property type="match status" value="1"/>
</dbReference>
<dbReference type="SUPFAM" id="SSF52972">
    <property type="entry name" value="ITPase-like"/>
    <property type="match status" value="1"/>
</dbReference>